<sequence>MVDVAFVCLGNICRSPMAEAIMRQRLIDRNISGVNVYSKGTGKWNLGEPPHEGTQDILNRHNIPFDGMISELFESSDDFDYIIAMDQSNVDNIQNINPNIKGKLFKLLEFSNMEESDVPDPYYTNNFEGVYEMVQSSCDNLIDFIVKDANLKEG</sequence>
<evidence type="ECO:0000250" key="1"/>
<evidence type="ECO:0000250" key="2">
    <source>
        <dbReference type="UniProtKB" id="P11064"/>
    </source>
</evidence>
<evidence type="ECO:0000305" key="3"/>
<keyword id="KW-0378">Hydrolase</keyword>
<keyword id="KW-0904">Protein phosphatase</keyword>
<organism>
    <name type="scientific">Staphylococcus haemolyticus (strain JCSC1435)</name>
    <dbReference type="NCBI Taxonomy" id="279808"/>
    <lineage>
        <taxon>Bacteria</taxon>
        <taxon>Bacillati</taxon>
        <taxon>Bacillota</taxon>
        <taxon>Bacilli</taxon>
        <taxon>Bacillales</taxon>
        <taxon>Staphylococcaceae</taxon>
        <taxon>Staphylococcus</taxon>
    </lineage>
</organism>
<dbReference type="EC" id="3.1.3.48"/>
<dbReference type="EMBL" id="AP006716">
    <property type="protein sequence ID" value="BAE04384.1"/>
    <property type="molecule type" value="Genomic_DNA"/>
</dbReference>
<dbReference type="RefSeq" id="WP_011275379.1">
    <property type="nucleotide sequence ID" value="NC_007168.1"/>
</dbReference>
<dbReference type="SMR" id="Q4L7J1"/>
<dbReference type="KEGG" id="sha:SH1075"/>
<dbReference type="eggNOG" id="COG0394">
    <property type="taxonomic scope" value="Bacteria"/>
</dbReference>
<dbReference type="HOGENOM" id="CLU_071415_2_3_9"/>
<dbReference type="OrthoDB" id="9784339at2"/>
<dbReference type="Proteomes" id="UP000000543">
    <property type="component" value="Chromosome"/>
</dbReference>
<dbReference type="GO" id="GO:0004725">
    <property type="term" value="F:protein tyrosine phosphatase activity"/>
    <property type="evidence" value="ECO:0007669"/>
    <property type="project" value="UniProtKB-EC"/>
</dbReference>
<dbReference type="CDD" id="cd16343">
    <property type="entry name" value="LMWPTP"/>
    <property type="match status" value="1"/>
</dbReference>
<dbReference type="Gene3D" id="3.40.50.2300">
    <property type="match status" value="1"/>
</dbReference>
<dbReference type="InterPro" id="IPR050438">
    <property type="entry name" value="LMW_PTPase"/>
</dbReference>
<dbReference type="InterPro" id="IPR023485">
    <property type="entry name" value="Ptyr_pPase"/>
</dbReference>
<dbReference type="InterPro" id="IPR036196">
    <property type="entry name" value="Ptyr_pPase_sf"/>
</dbReference>
<dbReference type="InterPro" id="IPR017867">
    <property type="entry name" value="Tyr_phospatase_low_mol_wt"/>
</dbReference>
<dbReference type="PANTHER" id="PTHR11717:SF7">
    <property type="entry name" value="LOW MOLECULAR WEIGHT PHOSPHOTYROSINE PROTEIN PHOSPHATASE"/>
    <property type="match status" value="1"/>
</dbReference>
<dbReference type="PANTHER" id="PTHR11717">
    <property type="entry name" value="LOW MOLECULAR WEIGHT PROTEIN TYROSINE PHOSPHATASE"/>
    <property type="match status" value="1"/>
</dbReference>
<dbReference type="Pfam" id="PF01451">
    <property type="entry name" value="LMWPc"/>
    <property type="match status" value="1"/>
</dbReference>
<dbReference type="PRINTS" id="PR00719">
    <property type="entry name" value="LMWPTPASE"/>
</dbReference>
<dbReference type="SMART" id="SM00226">
    <property type="entry name" value="LMWPc"/>
    <property type="match status" value="1"/>
</dbReference>
<dbReference type="SUPFAM" id="SSF52788">
    <property type="entry name" value="Phosphotyrosine protein phosphatases I"/>
    <property type="match status" value="1"/>
</dbReference>
<feature type="chain" id="PRO_0000300668" description="Low molecular weight protein-tyrosine-phosphatase PtpA">
    <location>
        <begin position="1"/>
        <end position="154"/>
    </location>
</feature>
<feature type="active site" description="Nucleophile" evidence="2">
    <location>
        <position position="8"/>
    </location>
</feature>
<feature type="active site" evidence="2">
    <location>
        <position position="14"/>
    </location>
</feature>
<feature type="active site" description="Proton donor" evidence="2">
    <location>
        <position position="120"/>
    </location>
</feature>
<proteinExistence type="inferred from homology"/>
<comment type="function">
    <text evidence="1">Dephosphorylates the phosphotyrosine-containing proteins.</text>
</comment>
<comment type="catalytic activity">
    <reaction>
        <text>O-phospho-L-tyrosyl-[protein] + H2O = L-tyrosyl-[protein] + phosphate</text>
        <dbReference type="Rhea" id="RHEA:10684"/>
        <dbReference type="Rhea" id="RHEA-COMP:10136"/>
        <dbReference type="Rhea" id="RHEA-COMP:20101"/>
        <dbReference type="ChEBI" id="CHEBI:15377"/>
        <dbReference type="ChEBI" id="CHEBI:43474"/>
        <dbReference type="ChEBI" id="CHEBI:46858"/>
        <dbReference type="ChEBI" id="CHEBI:61978"/>
        <dbReference type="EC" id="3.1.3.48"/>
    </reaction>
</comment>
<comment type="similarity">
    <text evidence="3">Belongs to the low molecular weight phosphotyrosine protein phosphatase family.</text>
</comment>
<name>PTPA_STAHJ</name>
<reference key="1">
    <citation type="journal article" date="2005" name="J. Bacteriol.">
        <title>Whole-genome sequencing of Staphylococcus haemolyticus uncovers the extreme plasticity of its genome and the evolution of human-colonizing staphylococcal species.</title>
        <authorList>
            <person name="Takeuchi F."/>
            <person name="Watanabe S."/>
            <person name="Baba T."/>
            <person name="Yuzawa H."/>
            <person name="Ito T."/>
            <person name="Morimoto Y."/>
            <person name="Kuroda M."/>
            <person name="Cui L."/>
            <person name="Takahashi M."/>
            <person name="Ankai A."/>
            <person name="Baba S."/>
            <person name="Fukui S."/>
            <person name="Lee J.C."/>
            <person name="Hiramatsu K."/>
        </authorList>
    </citation>
    <scope>NUCLEOTIDE SEQUENCE [LARGE SCALE GENOMIC DNA]</scope>
    <source>
        <strain>JCSC1435</strain>
    </source>
</reference>
<protein>
    <recommendedName>
        <fullName>Low molecular weight protein-tyrosine-phosphatase PtpA</fullName>
        <ecNumber>3.1.3.48</ecNumber>
    </recommendedName>
    <alternativeName>
        <fullName>Phosphotyrosine phosphatase A</fullName>
        <shortName>PTPase A</shortName>
    </alternativeName>
</protein>
<accession>Q4L7J1</accession>
<gene>
    <name type="primary">ptpA</name>
    <name type="ordered locus">SH1075</name>
</gene>